<keyword id="KW-0007">Acetylation</keyword>
<keyword id="KW-0090">Biological rhythms</keyword>
<keyword id="KW-0156">Chromatin regulator</keyword>
<keyword id="KW-0903">Direct protein sequencing</keyword>
<keyword id="KW-1017">Isopeptide bond</keyword>
<keyword id="KW-0539">Nucleus</keyword>
<keyword id="KW-0597">Phosphoprotein</keyword>
<keyword id="KW-1185">Reference proteome</keyword>
<keyword id="KW-0677">Repeat</keyword>
<keyword id="KW-0678">Repressor</keyword>
<keyword id="KW-0804">Transcription</keyword>
<keyword id="KW-0805">Transcription regulation</keyword>
<keyword id="KW-0832">Ubl conjugation</keyword>
<evidence type="ECO:0000250" key="1">
    <source>
        <dbReference type="UniProtKB" id="Q13185"/>
    </source>
</evidence>
<evidence type="ECO:0000255" key="2">
    <source>
        <dbReference type="PROSITE-ProRule" id="PRU00053"/>
    </source>
</evidence>
<evidence type="ECO:0000256" key="3">
    <source>
        <dbReference type="SAM" id="MobiDB-lite"/>
    </source>
</evidence>
<evidence type="ECO:0000269" key="4">
    <source>
    </source>
</evidence>
<evidence type="ECO:0000269" key="5">
    <source>
    </source>
</evidence>
<evidence type="ECO:0000269" key="6">
    <source>
    </source>
</evidence>
<evidence type="ECO:0000269" key="7">
    <source>
    </source>
</evidence>
<evidence type="ECO:0000305" key="8"/>
<evidence type="ECO:0007744" key="9">
    <source>
    </source>
</evidence>
<evidence type="ECO:0007744" key="10">
    <source>
    </source>
</evidence>
<evidence type="ECO:0007744" key="11">
    <source>
    </source>
</evidence>
<name>CBX3_MOUSE</name>
<organism>
    <name type="scientific">Mus musculus</name>
    <name type="common">Mouse</name>
    <dbReference type="NCBI Taxonomy" id="10090"/>
    <lineage>
        <taxon>Eukaryota</taxon>
        <taxon>Metazoa</taxon>
        <taxon>Chordata</taxon>
        <taxon>Craniata</taxon>
        <taxon>Vertebrata</taxon>
        <taxon>Euteleostomi</taxon>
        <taxon>Mammalia</taxon>
        <taxon>Eutheria</taxon>
        <taxon>Euarchontoglires</taxon>
        <taxon>Glires</taxon>
        <taxon>Rodentia</taxon>
        <taxon>Myomorpha</taxon>
        <taxon>Muroidea</taxon>
        <taxon>Muridae</taxon>
        <taxon>Murinae</taxon>
        <taxon>Mus</taxon>
        <taxon>Mus</taxon>
    </lineage>
</organism>
<dbReference type="EMBL" id="X56683">
    <property type="protein sequence ID" value="CAA40012.1"/>
    <property type="molecule type" value="mRNA"/>
</dbReference>
<dbReference type="EMBL" id="AJ278617">
    <property type="protein sequence ID" value="CAC42944.1"/>
    <property type="molecule type" value="Genomic_DNA"/>
</dbReference>
<dbReference type="EMBL" id="AJ278618">
    <property type="protein sequence ID" value="CAC42944.1"/>
    <property type="status" value="JOINED"/>
    <property type="molecule type" value="Genomic_DNA"/>
</dbReference>
<dbReference type="EMBL" id="AJ278619">
    <property type="protein sequence ID" value="CAC42944.1"/>
    <property type="status" value="JOINED"/>
    <property type="molecule type" value="Genomic_DNA"/>
</dbReference>
<dbReference type="PIR" id="S26846">
    <property type="entry name" value="S26846"/>
</dbReference>
<dbReference type="BMRB" id="P23198"/>
<dbReference type="SMR" id="P23198"/>
<dbReference type="ComplexPortal" id="CPX-470">
    <property type="entry name" value="L3MBTL1 complex"/>
</dbReference>
<dbReference type="CORUM" id="P23198"/>
<dbReference type="DIP" id="DIP-28136N"/>
<dbReference type="FunCoup" id="P23198">
    <property type="interactions" value="1994"/>
</dbReference>
<dbReference type="IntAct" id="P23198">
    <property type="interactions" value="16"/>
</dbReference>
<dbReference type="MINT" id="P23198"/>
<dbReference type="STRING" id="10090.ENSMUSP00000031862"/>
<dbReference type="GlyGen" id="P23198">
    <property type="glycosylation" value="1 site, 1 O-linked glycan (1 site)"/>
</dbReference>
<dbReference type="iPTMnet" id="P23198"/>
<dbReference type="PhosphoSitePlus" id="P23198"/>
<dbReference type="SwissPalm" id="P23198"/>
<dbReference type="REPRODUCTION-2DPAGE" id="IPI00129468"/>
<dbReference type="jPOST" id="P23198"/>
<dbReference type="PaxDb" id="10090-ENSMUSP00000031862"/>
<dbReference type="PeptideAtlas" id="P23198"/>
<dbReference type="ProteomicsDB" id="265569"/>
<dbReference type="Pumba" id="P23198"/>
<dbReference type="AGR" id="MGI:108515"/>
<dbReference type="MGI" id="MGI:108515">
    <property type="gene designation" value="Cbx3"/>
</dbReference>
<dbReference type="eggNOG" id="KOG1911">
    <property type="taxonomic scope" value="Eukaryota"/>
</dbReference>
<dbReference type="InParanoid" id="P23198"/>
<dbReference type="Reactome" id="R-MMU-8953750">
    <property type="pathway name" value="Transcriptional Regulation by E2F6"/>
</dbReference>
<dbReference type="ChiTaRS" id="Cbx3">
    <property type="organism name" value="mouse"/>
</dbReference>
<dbReference type="PRO" id="PR:P23198"/>
<dbReference type="Proteomes" id="UP000000589">
    <property type="component" value="Unplaced"/>
</dbReference>
<dbReference type="RNAct" id="P23198">
    <property type="molecule type" value="protein"/>
</dbReference>
<dbReference type="GO" id="GO:0000785">
    <property type="term" value="C:chromatin"/>
    <property type="evidence" value="ECO:0000314"/>
    <property type="project" value="MGI"/>
</dbReference>
<dbReference type="GO" id="GO:0061793">
    <property type="term" value="C:chromatin lock complex"/>
    <property type="evidence" value="ECO:0000266"/>
    <property type="project" value="ComplexPortal"/>
</dbReference>
<dbReference type="GO" id="GO:0010369">
    <property type="term" value="C:chromocenter"/>
    <property type="evidence" value="ECO:0000314"/>
    <property type="project" value="MGI"/>
</dbReference>
<dbReference type="GO" id="GO:0000779">
    <property type="term" value="C:condensed chromosome, centromeric region"/>
    <property type="evidence" value="ECO:0000314"/>
    <property type="project" value="UniProtKB"/>
</dbReference>
<dbReference type="GO" id="GO:0000792">
    <property type="term" value="C:heterochromatin"/>
    <property type="evidence" value="ECO:0000314"/>
    <property type="project" value="MGI"/>
</dbReference>
<dbReference type="GO" id="GO:0005635">
    <property type="term" value="C:nuclear envelope"/>
    <property type="evidence" value="ECO:0000314"/>
    <property type="project" value="UniProtKB"/>
</dbReference>
<dbReference type="GO" id="GO:0005654">
    <property type="term" value="C:nucleoplasm"/>
    <property type="evidence" value="ECO:0000304"/>
    <property type="project" value="Reactome"/>
</dbReference>
<dbReference type="GO" id="GO:0005634">
    <property type="term" value="C:nucleus"/>
    <property type="evidence" value="ECO:0000314"/>
    <property type="project" value="MGI"/>
</dbReference>
<dbReference type="GO" id="GO:0005721">
    <property type="term" value="C:pericentric heterochromatin"/>
    <property type="evidence" value="ECO:0000314"/>
    <property type="project" value="UniProtKB"/>
</dbReference>
<dbReference type="GO" id="GO:0090734">
    <property type="term" value="C:site of DNA damage"/>
    <property type="evidence" value="ECO:0000250"/>
    <property type="project" value="UniProtKB"/>
</dbReference>
<dbReference type="GO" id="GO:0140297">
    <property type="term" value="F:DNA-binding transcription factor binding"/>
    <property type="evidence" value="ECO:0000353"/>
    <property type="project" value="UniProtKB"/>
</dbReference>
<dbReference type="GO" id="GO:0000976">
    <property type="term" value="F:transcription cis-regulatory region binding"/>
    <property type="evidence" value="ECO:0000314"/>
    <property type="project" value="UniProtKB"/>
</dbReference>
<dbReference type="GO" id="GO:0006974">
    <property type="term" value="P:DNA damage response"/>
    <property type="evidence" value="ECO:0000250"/>
    <property type="project" value="UniProtKB"/>
</dbReference>
<dbReference type="GO" id="GO:0031507">
    <property type="term" value="P:heterochromatin formation"/>
    <property type="evidence" value="ECO:0000266"/>
    <property type="project" value="ComplexPortal"/>
</dbReference>
<dbReference type="GO" id="GO:0045892">
    <property type="term" value="P:negative regulation of DNA-templated transcription"/>
    <property type="evidence" value="ECO:0000314"/>
    <property type="project" value="MGI"/>
</dbReference>
<dbReference type="GO" id="GO:0048511">
    <property type="term" value="P:rhythmic process"/>
    <property type="evidence" value="ECO:0007669"/>
    <property type="project" value="UniProtKB-KW"/>
</dbReference>
<dbReference type="CDD" id="cd18652">
    <property type="entry name" value="CD_HP1gamma_Cbx3"/>
    <property type="match status" value="1"/>
</dbReference>
<dbReference type="FunFam" id="2.40.50.40:FF:000007">
    <property type="entry name" value="Chromobox protein homolog 1"/>
    <property type="match status" value="1"/>
</dbReference>
<dbReference type="FunFam" id="2.40.50.40:FF:000009">
    <property type="entry name" value="chromobox protein homolog 1"/>
    <property type="match status" value="1"/>
</dbReference>
<dbReference type="Gene3D" id="2.40.50.40">
    <property type="match status" value="2"/>
</dbReference>
<dbReference type="InterPro" id="IPR038033">
    <property type="entry name" value="CBX3_chromo_domain"/>
</dbReference>
<dbReference type="InterPro" id="IPR016197">
    <property type="entry name" value="Chromo-like_dom_sf"/>
</dbReference>
<dbReference type="InterPro" id="IPR000953">
    <property type="entry name" value="Chromo/chromo_shadow_dom"/>
</dbReference>
<dbReference type="InterPro" id="IPR017984">
    <property type="entry name" value="Chromo_dom_subgr"/>
</dbReference>
<dbReference type="InterPro" id="IPR023780">
    <property type="entry name" value="Chromo_domain"/>
</dbReference>
<dbReference type="InterPro" id="IPR008251">
    <property type="entry name" value="Chromo_shadow_dom"/>
</dbReference>
<dbReference type="InterPro" id="IPR023779">
    <property type="entry name" value="Chromodomain_CS"/>
</dbReference>
<dbReference type="InterPro" id="IPR051219">
    <property type="entry name" value="Heterochromatin_chromo-domain"/>
</dbReference>
<dbReference type="PANTHER" id="PTHR22812">
    <property type="entry name" value="CHROMOBOX PROTEIN"/>
    <property type="match status" value="1"/>
</dbReference>
<dbReference type="Pfam" id="PF00385">
    <property type="entry name" value="Chromo"/>
    <property type="match status" value="1"/>
</dbReference>
<dbReference type="Pfam" id="PF01393">
    <property type="entry name" value="Chromo_shadow"/>
    <property type="match status" value="1"/>
</dbReference>
<dbReference type="PRINTS" id="PR00504">
    <property type="entry name" value="CHROMODOMAIN"/>
</dbReference>
<dbReference type="SMART" id="SM00298">
    <property type="entry name" value="CHROMO"/>
    <property type="match status" value="2"/>
</dbReference>
<dbReference type="SMART" id="SM00300">
    <property type="entry name" value="ChSh"/>
    <property type="match status" value="1"/>
</dbReference>
<dbReference type="SUPFAM" id="SSF54160">
    <property type="entry name" value="Chromo domain-like"/>
    <property type="match status" value="2"/>
</dbReference>
<dbReference type="PROSITE" id="PS00598">
    <property type="entry name" value="CHROMO_1"/>
    <property type="match status" value="1"/>
</dbReference>
<dbReference type="PROSITE" id="PS50013">
    <property type="entry name" value="CHROMO_2"/>
    <property type="match status" value="2"/>
</dbReference>
<reference key="1">
    <citation type="submission" date="2000-06" db="EMBL/GenBank/DDBJ databases">
        <title>The gene and pseudogenes of Cbx3.</title>
        <authorList>
            <person name="Jones D.O."/>
            <person name="Mattei M.-G."/>
            <person name="Horsley D."/>
            <person name="Cowell I.G."/>
            <person name="Singh P.B."/>
        </authorList>
    </citation>
    <scope>NUCLEOTIDE SEQUENCE [GENOMIC DNA]</scope>
</reference>
<reference key="2">
    <citation type="journal article" date="1991" name="Nucleic Acids Res.">
        <title>A sequence motif found in a Drosophila heterochromatin protein is conserved in animals and plants.</title>
        <authorList>
            <person name="Singh P.B."/>
            <person name="Miller J.R."/>
            <person name="Pearce J."/>
            <person name="Kothary R."/>
            <person name="Burton R.D."/>
            <person name="Paro R."/>
            <person name="James T.C."/>
            <person name="Gaunt S.J."/>
        </authorList>
    </citation>
    <scope>NUCLEOTIDE SEQUENCE [MRNA] OF 11-183</scope>
    <source>
        <strain>C57BL/6J</strain>
        <tissue>Embryo</tissue>
    </source>
</reference>
<reference key="3">
    <citation type="submission" date="2007-07" db="UniProtKB">
        <authorList>
            <person name="Lubec G."/>
            <person name="Yang J.W."/>
            <person name="Zigmond M."/>
        </authorList>
    </citation>
    <scope>PROTEIN SEQUENCE OF 160-171</scope>
    <source>
        <tissue>Brain</tissue>
    </source>
</reference>
<reference key="4">
    <citation type="journal article" date="1996" name="Cytogenet. Cell Genet.">
        <title>M32, a murine homologue of Drosophila heterochromatin protein 1 (HP1), localises to euchromatin within interphase nuclei and is largely excluded from constitutive heterochromatin.</title>
        <authorList>
            <person name="Horsley D."/>
            <person name="Hutchings A."/>
            <person name="Butcher G.W."/>
            <person name="Singh P.B."/>
        </authorList>
    </citation>
    <scope>SUBCELLULAR LOCATION</scope>
</reference>
<reference key="5">
    <citation type="journal article" date="1996" name="EMBO J.">
        <title>A possible involvement of TIF1 alpha and TIF1 beta in the epigenetic control of transcription by nuclear receptors.</title>
        <authorList>
            <person name="le Douarin B."/>
            <person name="Nielsen A.L."/>
            <person name="Garnier J.-M."/>
            <person name="Ichinose H."/>
            <person name="Jeanmougin F."/>
            <person name="Losson R."/>
            <person name="Chambon P."/>
        </authorList>
    </citation>
    <scope>INTERACTION WITH TIF1A</scope>
</reference>
<reference key="6">
    <citation type="journal article" date="2004" name="Genes Dev.">
        <title>A silencing pathway to induce H3-K9 and H4-K20 trimethylation at constitutive heterochromatin.</title>
        <authorList>
            <person name="Schotta G."/>
            <person name="Lachner M."/>
            <person name="Sarma K."/>
            <person name="Ebert A."/>
            <person name="Sengupta R."/>
            <person name="Reuter G."/>
            <person name="Reinberg D."/>
            <person name="Jenuwein T."/>
        </authorList>
    </citation>
    <scope>INTERACTION WITH KMT5B AND KMT5C</scope>
</reference>
<reference key="7">
    <citation type="journal article" date="2008" name="J. Proteome Res.">
        <title>Specific phosphopeptide enrichment with immobilized titanium ion affinity chromatography adsorbent for phosphoproteome analysis.</title>
        <authorList>
            <person name="Zhou H."/>
            <person name="Ye M."/>
            <person name="Dong J."/>
            <person name="Han G."/>
            <person name="Jiang X."/>
            <person name="Wu R."/>
            <person name="Zou H."/>
        </authorList>
    </citation>
    <scope>PHOSPHORYLATION [LARGE SCALE ANALYSIS] AT SER-95</scope>
    <scope>IDENTIFICATION BY MASS SPECTROMETRY [LARGE SCALE ANALYSIS]</scope>
    <source>
        <tissue>Liver</tissue>
    </source>
</reference>
<reference key="8">
    <citation type="journal article" date="2009" name="Immunity">
        <title>The phagosomal proteome in interferon-gamma-activated macrophages.</title>
        <authorList>
            <person name="Trost M."/>
            <person name="English L."/>
            <person name="Lemieux S."/>
            <person name="Courcelles M."/>
            <person name="Desjardins M."/>
            <person name="Thibault P."/>
        </authorList>
    </citation>
    <scope>IDENTIFICATION BY MASS SPECTROMETRY [LARGE SCALE ANALYSIS]</scope>
</reference>
<reference key="9">
    <citation type="journal article" date="2010" name="Cell">
        <title>A tissue-specific atlas of mouse protein phosphorylation and expression.</title>
        <authorList>
            <person name="Huttlin E.L."/>
            <person name="Jedrychowski M.P."/>
            <person name="Elias J.E."/>
            <person name="Goswami T."/>
            <person name="Rad R."/>
            <person name="Beausoleil S.A."/>
            <person name="Villen J."/>
            <person name="Haas W."/>
            <person name="Sowa M.E."/>
            <person name="Gygi S.P."/>
        </authorList>
    </citation>
    <scope>PHOSPHORYLATION [LARGE SCALE ANALYSIS] AT SER-93; SER-95 AND SER-176</scope>
    <scope>IDENTIFICATION BY MASS SPECTROMETRY [LARGE SCALE ANALYSIS]</scope>
    <source>
        <tissue>Brain</tissue>
        <tissue>Brown adipose tissue</tissue>
        <tissue>Heart</tissue>
        <tissue>Kidney</tissue>
        <tissue>Liver</tissue>
        <tissue>Lung</tissue>
        <tissue>Pancreas</tissue>
        <tissue>Spleen</tissue>
        <tissue>Testis</tissue>
    </source>
</reference>
<reference key="10">
    <citation type="journal article" date="2013" name="Mol. Cell">
        <title>SIRT5-mediated lysine desuccinylation impacts diverse metabolic pathways.</title>
        <authorList>
            <person name="Park J."/>
            <person name="Chen Y."/>
            <person name="Tishkoff D.X."/>
            <person name="Peng C."/>
            <person name="Tan M."/>
            <person name="Dai L."/>
            <person name="Xie Z."/>
            <person name="Zhang Y."/>
            <person name="Zwaans B.M."/>
            <person name="Skinner M.E."/>
            <person name="Lombard D.B."/>
            <person name="Zhao Y."/>
        </authorList>
    </citation>
    <scope>ACETYLATION [LARGE SCALE ANALYSIS] AT ALA-2; LYS-5 AND LYS-44</scope>
    <scope>CLEAVAGE OF INITIATOR METHIONINE [LARGE SCALE ANALYSIS]</scope>
    <scope>IDENTIFICATION BY MASS SPECTROMETRY [LARGE SCALE ANALYSIS]</scope>
    <source>
        <tissue>Embryonic fibroblast</tissue>
    </source>
</reference>
<reference key="11">
    <citation type="journal article" date="2014" name="Nat. Struct. Mol. Biol.">
        <title>Temporal orchestration of repressive chromatin modifiers by circadian clock Period complexes.</title>
        <authorList>
            <person name="Duong H.A."/>
            <person name="Weitz C.J."/>
        </authorList>
    </citation>
    <scope>FUNCTION IN CIRCADIAN RHYTHMS</scope>
    <scope>IDENTIFICATION IN A LARGE PER COMPLEX</scope>
</reference>
<accession>P23198</accession>
<accession>Q921C4</accession>
<feature type="initiator methionine" description="Removed" evidence="11">
    <location>
        <position position="1"/>
    </location>
</feature>
<feature type="chain" id="PRO_0000080204" description="Chromobox protein homolog 3">
    <location>
        <begin position="2"/>
        <end position="183"/>
    </location>
</feature>
<feature type="domain" description="Chromo 1" evidence="2">
    <location>
        <begin position="30"/>
        <end position="88"/>
    </location>
</feature>
<feature type="domain" description="Chromo 2; shadow subtype" evidence="2">
    <location>
        <begin position="121"/>
        <end position="179"/>
    </location>
</feature>
<feature type="region of interest" description="Disordered" evidence="3">
    <location>
        <begin position="1"/>
        <end position="28"/>
    </location>
</feature>
<feature type="region of interest" description="Disordered" evidence="3">
    <location>
        <begin position="78"/>
        <end position="125"/>
    </location>
</feature>
<feature type="compositionally biased region" description="Basic and acidic residues" evidence="3">
    <location>
        <begin position="82"/>
        <end position="125"/>
    </location>
</feature>
<feature type="modified residue" description="N-acetylalanine" evidence="11">
    <location>
        <position position="2"/>
    </location>
</feature>
<feature type="modified residue" description="N6-acetyllysine; alternate" evidence="11">
    <location>
        <position position="5"/>
    </location>
</feature>
<feature type="modified residue" description="N6-acetyllysine; alternate" evidence="1">
    <location>
        <position position="10"/>
    </location>
</feature>
<feature type="modified residue" description="N6-acetyllysine" evidence="11">
    <location>
        <position position="44"/>
    </location>
</feature>
<feature type="modified residue" description="N6-acetyllysine" evidence="1">
    <location>
        <position position="50"/>
    </location>
</feature>
<feature type="modified residue" description="Phosphoserine" evidence="10">
    <location>
        <position position="93"/>
    </location>
</feature>
<feature type="modified residue" description="Phosphoserine" evidence="9 10">
    <location>
        <position position="95"/>
    </location>
</feature>
<feature type="modified residue" description="Phosphoserine" evidence="1">
    <location>
        <position position="97"/>
    </location>
</feature>
<feature type="modified residue" description="Phosphoserine" evidence="1">
    <location>
        <position position="99"/>
    </location>
</feature>
<feature type="modified residue" description="Phosphoserine" evidence="10">
    <location>
        <position position="176"/>
    </location>
</feature>
<feature type="cross-link" description="Glycyl lysine isopeptide (Lys-Gly) (interchain with G-Cter in SUMO2); alternate" evidence="1">
    <location>
        <position position="5"/>
    </location>
</feature>
<feature type="cross-link" description="Glycyl lysine isopeptide (Lys-Gly) (interchain with G-Cter in SUMO2); alternate" evidence="1">
    <location>
        <position position="10"/>
    </location>
</feature>
<feature type="cross-link" description="Glycyl lysine isopeptide (Lys-Gly) (interchain with G-Cter in SUMO2)" evidence="1">
    <location>
        <position position="21"/>
    </location>
</feature>
<feature type="cross-link" description="Glycyl lysine isopeptide (Lys-Gly) (interchain with G-Cter in SUMO2)" evidence="1">
    <location>
        <position position="103"/>
    </location>
</feature>
<feature type="cross-link" description="Glycyl lysine isopeptide (Lys-Gly) (interchain with G-Cter in SUMO2)" evidence="1">
    <location>
        <position position="154"/>
    </location>
</feature>
<sequence length="183" mass="20855">MASNKTTLQKMGKKQNGKSKKVEEAEPEEFVVEKVLDRRVVNGKVEYFLKWKGFTDADNTWEPEENLDCPELIEDFLNSQKAGKEKDGTKRKSLSDSESDDSKSKKKRDAADKPRGFARGLDPERIIGATDSSGELMFLMKWKDSDEADLVLAKEANMKCPQIVIAFYEERLTWHSCPEDEAQ</sequence>
<protein>
    <recommendedName>
        <fullName>Chromobox protein homolog 3</fullName>
    </recommendedName>
    <alternativeName>
        <fullName>Heterochromatin protein 1 homolog gamma</fullName>
        <shortName>HP1 gamma</shortName>
    </alternativeName>
    <alternativeName>
        <fullName>M32</fullName>
    </alternativeName>
    <alternativeName>
        <fullName>Modifier 2 protein</fullName>
    </alternativeName>
</protein>
<gene>
    <name type="primary">Cbx3</name>
</gene>
<proteinExistence type="evidence at protein level"/>
<comment type="function">
    <text evidence="1 5">Component of heterochromatin. Recognizes and binds histone H3 tails methylated at 'Lys-9', leading to epigenetic repression. Probably involved in the repression of many genes located in euchromatin, such as E2F1, MYC and CDC25A. Involved in the formation of functional kinetochore through interaction with MIS12 complex proteins. Contributes to the conversion of local chromatin to a heterochromatin-like repressive state through H3 'Lys-9' trimethylation, mediates the recruitment of the methyltransferases SUV39H1 and/or SUV39H2 by the PER complex to the E-box elements of the circadian target genes such as PER2 itself or PER1 (PubMed:24413057). Mediates the recruitment of NIPBL to sites of DNA damage at double-strand breaks (DSBs) (By similarity).</text>
</comment>
<comment type="subunit">
    <text evidence="1 4 5 7">Binds directly to CHAF1A. Interacts with histone H3 methylated at 'Lys-9' (By similarity). Part of the E2F6.com-1 complex in G0 phase composed of E2F6, MGA, MAX, TFDP1, CBX3, BAT8, EUHMTASE1, RING1, RNF2, MBLR, L3MBTL2 and YAF2 (By similarity). Interacts with INCENP, TRIM28/TIF1B and SP100 (By similarity). Interacts with TIF1/TIF1A (PubMed:8978696). Interacts with MIS12 and DSN1 (By similarity). Can interact directly with CBX5 via the chromoshadow domain (By similarity). Interacts with KMT5B and KMT5C (PubMed:15145825). Interacts with POGZ (By similarity). Interacts with CHAMP1 (By similarity). The large PER complex involved in the histone methylation is composed of at least PER2, CBX3, TRIM28, SUV39H1 and/or SUV39H2; CBX3 mediates the formation of the complex (PubMed:24413057). Interacts with INCENP (By similarity). Interacts with NIPBL (via PxVxL motif) (By similarity). Interacts with LRIF1 (via PxVxL motif) (By similarity). Interacts with TTLL12 (By similarity). Interacts with ZNF263; recruited to the SIX3 promoter along with other proteins involved in chromatin modification and transcriptional corepression where it contributes to transcriptional repression (By similarity). Interacts with CHD3 (By similarity). Interacts with CHD4 (By similarity).</text>
</comment>
<comment type="interaction">
    <interactant intactId="EBI-78162">
        <id>P23198</id>
    </interactant>
    <interactant intactId="EBI-78139">
        <id>Q13263</id>
        <label>TRIM28</label>
    </interactant>
    <organismsDiffer>true</organismsDiffer>
    <experiments>2</experiments>
</comment>
<comment type="subcellular location">
    <subcellularLocation>
        <location evidence="6">Nucleus</location>
    </subcellularLocation>
    <text evidence="8">May be associated with microtubules and mitotic poles during mitosis (Potential). Associates with euchromatin and is largely excluded from constitutive heterochromatin.</text>
</comment>
<comment type="PTM">
    <text evidence="1">Phosphorylated by PIM1. Phosphorylated during interphase and possibly hyper-phosphorylated during mitosis.</text>
</comment>